<gene>
    <name evidence="1" type="primary">ureC</name>
    <name type="ordered locus">BPEN_542</name>
</gene>
<reference key="1">
    <citation type="journal article" date="2005" name="Genome Res.">
        <title>Genome sequence of Blochmannia pennsylvanicus indicates parallel evolutionary trends among bacterial mutualists of insects.</title>
        <authorList>
            <person name="Degnan P.H."/>
            <person name="Lazarus A.B."/>
            <person name="Wernegreen J.J."/>
        </authorList>
    </citation>
    <scope>NUCLEOTIDE SEQUENCE [LARGE SCALE GENOMIC DNA]</scope>
    <source>
        <strain>BPEN</strain>
    </source>
</reference>
<evidence type="ECO:0000255" key="1">
    <source>
        <dbReference type="HAMAP-Rule" id="MF_01953"/>
    </source>
</evidence>
<proteinExistence type="inferred from homology"/>
<dbReference type="EC" id="3.5.1.5" evidence="1"/>
<dbReference type="EMBL" id="CP000016">
    <property type="protein sequence ID" value="AAZ41152.1"/>
    <property type="molecule type" value="Genomic_DNA"/>
</dbReference>
<dbReference type="RefSeq" id="WP_011283063.1">
    <property type="nucleotide sequence ID" value="NC_007292.1"/>
</dbReference>
<dbReference type="SMR" id="Q492E9"/>
<dbReference type="STRING" id="291272.BPEN_542"/>
<dbReference type="KEGG" id="bpn:BPEN_542"/>
<dbReference type="eggNOG" id="COG0804">
    <property type="taxonomic scope" value="Bacteria"/>
</dbReference>
<dbReference type="HOGENOM" id="CLU_000980_0_0_6"/>
<dbReference type="OrthoDB" id="9802793at2"/>
<dbReference type="UniPathway" id="UPA00258">
    <property type="reaction ID" value="UER00370"/>
</dbReference>
<dbReference type="Proteomes" id="UP000007794">
    <property type="component" value="Chromosome"/>
</dbReference>
<dbReference type="GO" id="GO:0005737">
    <property type="term" value="C:cytoplasm"/>
    <property type="evidence" value="ECO:0007669"/>
    <property type="project" value="UniProtKB-SubCell"/>
</dbReference>
<dbReference type="GO" id="GO:0016151">
    <property type="term" value="F:nickel cation binding"/>
    <property type="evidence" value="ECO:0007669"/>
    <property type="project" value="UniProtKB-UniRule"/>
</dbReference>
<dbReference type="GO" id="GO:0009039">
    <property type="term" value="F:urease activity"/>
    <property type="evidence" value="ECO:0007669"/>
    <property type="project" value="UniProtKB-UniRule"/>
</dbReference>
<dbReference type="GO" id="GO:0043419">
    <property type="term" value="P:urea catabolic process"/>
    <property type="evidence" value="ECO:0007669"/>
    <property type="project" value="UniProtKB-UniRule"/>
</dbReference>
<dbReference type="CDD" id="cd00375">
    <property type="entry name" value="Urease_alpha"/>
    <property type="match status" value="1"/>
</dbReference>
<dbReference type="Gene3D" id="3.20.20.140">
    <property type="entry name" value="Metal-dependent hydrolases"/>
    <property type="match status" value="1"/>
</dbReference>
<dbReference type="Gene3D" id="2.30.40.10">
    <property type="entry name" value="Urease, subunit C, domain 1"/>
    <property type="match status" value="1"/>
</dbReference>
<dbReference type="HAMAP" id="MF_01953">
    <property type="entry name" value="Urease_alpha"/>
    <property type="match status" value="1"/>
</dbReference>
<dbReference type="InterPro" id="IPR006680">
    <property type="entry name" value="Amidohydro-rel"/>
</dbReference>
<dbReference type="InterPro" id="IPR011059">
    <property type="entry name" value="Metal-dep_hydrolase_composite"/>
</dbReference>
<dbReference type="InterPro" id="IPR032466">
    <property type="entry name" value="Metal_Hydrolase"/>
</dbReference>
<dbReference type="InterPro" id="IPR011612">
    <property type="entry name" value="Urease_alpha_N_dom"/>
</dbReference>
<dbReference type="InterPro" id="IPR050112">
    <property type="entry name" value="Urease_alpha_subunit"/>
</dbReference>
<dbReference type="InterPro" id="IPR017950">
    <property type="entry name" value="Urease_AS"/>
</dbReference>
<dbReference type="InterPro" id="IPR005848">
    <property type="entry name" value="Urease_asu"/>
</dbReference>
<dbReference type="InterPro" id="IPR017951">
    <property type="entry name" value="Urease_asu_c"/>
</dbReference>
<dbReference type="InterPro" id="IPR029754">
    <property type="entry name" value="Urease_Ni-bd"/>
</dbReference>
<dbReference type="NCBIfam" id="NF009686">
    <property type="entry name" value="PRK13207.1"/>
    <property type="match status" value="1"/>
</dbReference>
<dbReference type="NCBIfam" id="TIGR01792">
    <property type="entry name" value="urease_alph"/>
    <property type="match status" value="1"/>
</dbReference>
<dbReference type="PANTHER" id="PTHR43440">
    <property type="entry name" value="UREASE"/>
    <property type="match status" value="1"/>
</dbReference>
<dbReference type="PANTHER" id="PTHR43440:SF1">
    <property type="entry name" value="UREASE"/>
    <property type="match status" value="1"/>
</dbReference>
<dbReference type="Pfam" id="PF01979">
    <property type="entry name" value="Amidohydro_1"/>
    <property type="match status" value="1"/>
</dbReference>
<dbReference type="Pfam" id="PF00449">
    <property type="entry name" value="Urease_alpha"/>
    <property type="match status" value="1"/>
</dbReference>
<dbReference type="PRINTS" id="PR01752">
    <property type="entry name" value="UREASE"/>
</dbReference>
<dbReference type="SUPFAM" id="SSF51338">
    <property type="entry name" value="Composite domain of metallo-dependent hydrolases"/>
    <property type="match status" value="2"/>
</dbReference>
<dbReference type="SUPFAM" id="SSF51556">
    <property type="entry name" value="Metallo-dependent hydrolases"/>
    <property type="match status" value="1"/>
</dbReference>
<dbReference type="PROSITE" id="PS01120">
    <property type="entry name" value="UREASE_1"/>
    <property type="match status" value="1"/>
</dbReference>
<dbReference type="PROSITE" id="PS00145">
    <property type="entry name" value="UREASE_2"/>
    <property type="match status" value="1"/>
</dbReference>
<dbReference type="PROSITE" id="PS51368">
    <property type="entry name" value="UREASE_3"/>
    <property type="match status" value="1"/>
</dbReference>
<comment type="catalytic activity">
    <reaction evidence="1">
        <text>urea + 2 H2O + H(+) = hydrogencarbonate + 2 NH4(+)</text>
        <dbReference type="Rhea" id="RHEA:20557"/>
        <dbReference type="ChEBI" id="CHEBI:15377"/>
        <dbReference type="ChEBI" id="CHEBI:15378"/>
        <dbReference type="ChEBI" id="CHEBI:16199"/>
        <dbReference type="ChEBI" id="CHEBI:17544"/>
        <dbReference type="ChEBI" id="CHEBI:28938"/>
        <dbReference type="EC" id="3.5.1.5"/>
    </reaction>
</comment>
<comment type="cofactor">
    <cofactor evidence="1">
        <name>Ni cation</name>
        <dbReference type="ChEBI" id="CHEBI:25516"/>
    </cofactor>
    <text evidence="1">Binds 2 nickel ions per subunit.</text>
</comment>
<comment type="pathway">
    <text evidence="1">Nitrogen metabolism; urea degradation; CO(2) and NH(3) from urea (urease route): step 1/1.</text>
</comment>
<comment type="subunit">
    <text evidence="1">Heterotrimer of UreA (gamma), UreB (beta) and UreC (alpha) subunits. Three heterotrimers associate to form the active enzyme.</text>
</comment>
<comment type="subcellular location">
    <subcellularLocation>
        <location evidence="1">Cytoplasm</location>
    </subcellularLocation>
</comment>
<comment type="PTM">
    <text evidence="1">Carboxylation allows a single lysine to coordinate two nickel ions.</text>
</comment>
<comment type="similarity">
    <text evidence="1">Belongs to the metallo-dependent hydrolases superfamily. Urease alpha subunit family.</text>
</comment>
<keyword id="KW-0963">Cytoplasm</keyword>
<keyword id="KW-0378">Hydrolase</keyword>
<keyword id="KW-0479">Metal-binding</keyword>
<keyword id="KW-0533">Nickel</keyword>
<keyword id="KW-1185">Reference proteome</keyword>
<accession>Q492E9</accession>
<protein>
    <recommendedName>
        <fullName evidence="1">Urease subunit alpha</fullName>
        <ecNumber evidence="1">3.5.1.5</ecNumber>
    </recommendedName>
    <alternativeName>
        <fullName evidence="1">Urea amidohydrolase subunit alpha</fullName>
    </alternativeName>
</protein>
<organism>
    <name type="scientific">Blochmanniella pennsylvanica (strain BPEN)</name>
    <dbReference type="NCBI Taxonomy" id="291272"/>
    <lineage>
        <taxon>Bacteria</taxon>
        <taxon>Pseudomonadati</taxon>
        <taxon>Pseudomonadota</taxon>
        <taxon>Gammaproteobacteria</taxon>
        <taxon>Enterobacterales</taxon>
        <taxon>Enterobacteriaceae</taxon>
        <taxon>ant endosymbionts</taxon>
        <taxon>Candidatus Blochmanniella</taxon>
    </lineage>
</organism>
<name>URE1_BLOPB</name>
<sequence>MLLSKHDYASLFGPTIGDSVRLADTELWIRIEKDFTVYGEEVKFGGGKVIRDGMGQGQMSSKDCVDLVLTNAVILDYWGIIKADIGINNGRISGIGKAGNPDVQPNVTISIGPGTEIIAAEGKIVTAGGIDAHVHFICPQQVEEALCSGITTFIGGGTGPATGSNATTCTPGPWFISRMLQVADTLPINIGVTGKGSASFPDALEEQIIAGAIGLKVHEDWGATPAAIDCCLNVADRFDIQVSMHTDTLNESGFVEDTLSAIKGRTVHAYHTEGAGGGHSPDIIRMCGFSNVLPSSTNPTMPYTVNTIDEHLDMMMICHNLNPNLPEDMAFSESRIRRETIAAEDVLHDLGALSMISSDSQAMGRVGEVILRTWQTAHKMKQQRGSLLGDATRYDDNVRVKRYIAKYTINPAITHGISHEVGSVEIGKLADLVLWSPVFFGVKPELIIKGGMIISSVMGDPNASIPTPQPVHYRLMFGARGKAKHATRMTFLSQVAYNSELTDYLKLVSLIGEVRHCRNIQKKHMINNSWQPVIEVDSQTYQVRANGELLTCEPASVLPMSQRYFLF</sequence>
<feature type="chain" id="PRO_0000234135" description="Urease subunit alpha">
    <location>
        <begin position="1"/>
        <end position="567"/>
    </location>
</feature>
<feature type="domain" description="Urease" evidence="1">
    <location>
        <begin position="128"/>
        <end position="567"/>
    </location>
</feature>
<feature type="active site" description="Proton donor" evidence="1">
    <location>
        <position position="319"/>
    </location>
</feature>
<feature type="binding site" evidence="1">
    <location>
        <position position="133"/>
    </location>
    <ligand>
        <name>Ni(2+)</name>
        <dbReference type="ChEBI" id="CHEBI:49786"/>
        <label>1</label>
    </ligand>
</feature>
<feature type="binding site" evidence="1">
    <location>
        <position position="135"/>
    </location>
    <ligand>
        <name>Ni(2+)</name>
        <dbReference type="ChEBI" id="CHEBI:49786"/>
        <label>1</label>
    </ligand>
</feature>
<feature type="binding site" description="via carbamate group" evidence="1">
    <location>
        <position position="216"/>
    </location>
    <ligand>
        <name>Ni(2+)</name>
        <dbReference type="ChEBI" id="CHEBI:49786"/>
        <label>1</label>
    </ligand>
</feature>
<feature type="binding site" description="via carbamate group" evidence="1">
    <location>
        <position position="216"/>
    </location>
    <ligand>
        <name>Ni(2+)</name>
        <dbReference type="ChEBI" id="CHEBI:49786"/>
        <label>2</label>
    </ligand>
</feature>
<feature type="binding site" evidence="1">
    <location>
        <position position="218"/>
    </location>
    <ligand>
        <name>substrate</name>
    </ligand>
</feature>
<feature type="binding site" evidence="1">
    <location>
        <position position="245"/>
    </location>
    <ligand>
        <name>Ni(2+)</name>
        <dbReference type="ChEBI" id="CHEBI:49786"/>
        <label>2</label>
    </ligand>
</feature>
<feature type="binding site" evidence="1">
    <location>
        <position position="271"/>
    </location>
    <ligand>
        <name>Ni(2+)</name>
        <dbReference type="ChEBI" id="CHEBI:49786"/>
        <label>2</label>
    </ligand>
</feature>
<feature type="binding site" evidence="1">
    <location>
        <position position="359"/>
    </location>
    <ligand>
        <name>Ni(2+)</name>
        <dbReference type="ChEBI" id="CHEBI:49786"/>
        <label>1</label>
    </ligand>
</feature>
<feature type="modified residue" description="N6-carboxylysine" evidence="1">
    <location>
        <position position="216"/>
    </location>
</feature>